<dbReference type="GO" id="GO:0005576">
    <property type="term" value="C:extracellular region"/>
    <property type="evidence" value="ECO:0007669"/>
    <property type="project" value="UniProtKB-SubCell"/>
</dbReference>
<dbReference type="GO" id="GO:0005509">
    <property type="term" value="F:calcium ion binding"/>
    <property type="evidence" value="ECO:0007669"/>
    <property type="project" value="InterPro"/>
</dbReference>
<dbReference type="GO" id="GO:0005179">
    <property type="term" value="F:hormone activity"/>
    <property type="evidence" value="ECO:0000250"/>
    <property type="project" value="UniProtKB"/>
</dbReference>
<dbReference type="GO" id="GO:0046848">
    <property type="term" value="F:hydroxyapatite binding"/>
    <property type="evidence" value="ECO:0007669"/>
    <property type="project" value="TreeGrafter"/>
</dbReference>
<dbReference type="GO" id="GO:0008147">
    <property type="term" value="F:structural constituent of bone"/>
    <property type="evidence" value="ECO:0000250"/>
    <property type="project" value="UniProtKB"/>
</dbReference>
<dbReference type="GO" id="GO:0031214">
    <property type="term" value="P:biomineral tissue development"/>
    <property type="evidence" value="ECO:0007669"/>
    <property type="project" value="UniProtKB-KW"/>
</dbReference>
<dbReference type="GO" id="GO:0060348">
    <property type="term" value="P:bone development"/>
    <property type="evidence" value="ECO:0007669"/>
    <property type="project" value="InterPro"/>
</dbReference>
<dbReference type="GO" id="GO:0007420">
    <property type="term" value="P:brain development"/>
    <property type="evidence" value="ECO:0000250"/>
    <property type="project" value="UniProtKB"/>
</dbReference>
<dbReference type="GO" id="GO:0032869">
    <property type="term" value="P:cellular response to insulin stimulus"/>
    <property type="evidence" value="ECO:0000250"/>
    <property type="project" value="UniProtKB"/>
</dbReference>
<dbReference type="GO" id="GO:0050890">
    <property type="term" value="P:cognition"/>
    <property type="evidence" value="ECO:0000250"/>
    <property type="project" value="UniProtKB"/>
</dbReference>
<dbReference type="GO" id="GO:0042593">
    <property type="term" value="P:glucose homeostasis"/>
    <property type="evidence" value="ECO:0000250"/>
    <property type="project" value="UniProtKB"/>
</dbReference>
<dbReference type="GO" id="GO:0007611">
    <property type="term" value="P:learning or memory"/>
    <property type="evidence" value="ECO:0000250"/>
    <property type="project" value="UniProtKB"/>
</dbReference>
<dbReference type="GO" id="GO:1903011">
    <property type="term" value="P:negative regulation of bone development"/>
    <property type="evidence" value="ECO:0000250"/>
    <property type="project" value="UniProtKB"/>
</dbReference>
<dbReference type="GO" id="GO:0001649">
    <property type="term" value="P:osteoblast differentiation"/>
    <property type="evidence" value="ECO:0007669"/>
    <property type="project" value="TreeGrafter"/>
</dbReference>
<dbReference type="GO" id="GO:0001956">
    <property type="term" value="P:positive regulation of neurotransmitter secretion"/>
    <property type="evidence" value="ECO:0000250"/>
    <property type="project" value="UniProtKB"/>
</dbReference>
<dbReference type="GO" id="GO:1900076">
    <property type="term" value="P:regulation of cellular response to insulin stimulus"/>
    <property type="evidence" value="ECO:0007669"/>
    <property type="project" value="InterPro"/>
</dbReference>
<dbReference type="GO" id="GO:2000224">
    <property type="term" value="P:regulation of testosterone biosynthetic process"/>
    <property type="evidence" value="ECO:0000250"/>
    <property type="project" value="UniProtKB"/>
</dbReference>
<dbReference type="GO" id="GO:0032571">
    <property type="term" value="P:response to vitamin K"/>
    <property type="evidence" value="ECO:0007669"/>
    <property type="project" value="InterPro"/>
</dbReference>
<dbReference type="GO" id="GO:0044342">
    <property type="term" value="P:type B pancreatic cell proliferation"/>
    <property type="evidence" value="ECO:0000250"/>
    <property type="project" value="UniProtKB"/>
</dbReference>
<dbReference type="InterPro" id="IPR035972">
    <property type="entry name" value="GLA-like_dom_SF"/>
</dbReference>
<dbReference type="InterPro" id="IPR000294">
    <property type="entry name" value="GLA_domain"/>
</dbReference>
<dbReference type="InterPro" id="IPR039176">
    <property type="entry name" value="Osteocalcin"/>
</dbReference>
<dbReference type="PANTHER" id="PTHR14235">
    <property type="entry name" value="OSTEOCALCIN"/>
    <property type="match status" value="1"/>
</dbReference>
<dbReference type="PANTHER" id="PTHR14235:SF0">
    <property type="entry name" value="OSTEOCALCIN"/>
    <property type="match status" value="1"/>
</dbReference>
<dbReference type="SUPFAM" id="SSF57630">
    <property type="entry name" value="GLA-domain"/>
    <property type="match status" value="1"/>
</dbReference>
<dbReference type="PROSITE" id="PS50998">
    <property type="entry name" value="GLA_2"/>
    <property type="match status" value="1"/>
</dbReference>
<keyword id="KW-0091">Biomineralization</keyword>
<keyword id="KW-0106">Calcium</keyword>
<keyword id="KW-0903">Direct protein sequencing</keyword>
<keyword id="KW-1015">Disulfide bond</keyword>
<keyword id="KW-0952">Extinct organism protein</keyword>
<keyword id="KW-0301">Gamma-carboxyglutamic acid</keyword>
<keyword id="KW-0372">Hormone</keyword>
<keyword id="KW-0479">Metal-binding</keyword>
<keyword id="KW-0964">Secreted</keyword>
<organism>
    <name type="scientific">Homo sapiens neanderthalensis</name>
    <name type="common">Neanderthal</name>
    <dbReference type="NCBI Taxonomy" id="63221"/>
    <lineage>
        <taxon>Eukaryota</taxon>
        <taxon>Metazoa</taxon>
        <taxon>Chordata</taxon>
        <taxon>Craniata</taxon>
        <taxon>Vertebrata</taxon>
        <taxon>Euteleostomi</taxon>
        <taxon>Mammalia</taxon>
        <taxon>Eutheria</taxon>
        <taxon>Euarchontoglires</taxon>
        <taxon>Primates</taxon>
        <taxon>Haplorrhini</taxon>
        <taxon>Catarrhini</taxon>
        <taxon>Hominidae</taxon>
        <taxon>Homo</taxon>
    </lineage>
</organism>
<evidence type="ECO:0000250" key="1">
    <source>
        <dbReference type="UniProtKB" id="P02819"/>
    </source>
</evidence>
<evidence type="ECO:0000250" key="2">
    <source>
        <dbReference type="UniProtKB" id="P02820"/>
    </source>
</evidence>
<evidence type="ECO:0000250" key="3">
    <source>
        <dbReference type="UniProtKB" id="P83489"/>
    </source>
</evidence>
<evidence type="ECO:0000250" key="4">
    <source>
        <dbReference type="UniProtKB" id="P86546"/>
    </source>
</evidence>
<evidence type="ECO:0000255" key="5">
    <source>
        <dbReference type="PROSITE-ProRule" id="PRU00463"/>
    </source>
</evidence>
<evidence type="ECO:0000269" key="6">
    <source>
    </source>
</evidence>
<evidence type="ECO:0000303" key="7">
    <source>
    </source>
</evidence>
<evidence type="ECO:0000305" key="8"/>
<reference evidence="8" key="1">
    <citation type="journal article" date="2005" name="Proc. Natl. Acad. Sci. U.S.A.">
        <title>Osteocalcin protein sequences of Neanderthals and modern primates.</title>
        <authorList>
            <person name="Nielsen-Marsh C.M."/>
            <person name="Richards M.P."/>
            <person name="Hauschka P.V."/>
            <person name="Thomas-Oates J.E."/>
            <person name="Trinkaus E."/>
            <person name="Pettit P.B."/>
            <person name="Karavanic I."/>
            <person name="Poinar H."/>
            <person name="Collins M.J."/>
        </authorList>
    </citation>
    <scope>PROTEIN SEQUENCE</scope>
    <source>
        <tissue evidence="6">Bone</tissue>
    </source>
</reference>
<protein>
    <recommendedName>
        <fullName>Osteocalcin</fullName>
    </recommendedName>
    <alternativeName>
        <fullName>Bone Gla protein</fullName>
        <shortName>BGP</shortName>
    </alternativeName>
    <alternativeName>
        <fullName>Gamma-carboxyglutamic acid-containing protein</fullName>
    </alternativeName>
</protein>
<sequence length="24" mass="2823">REVCELNPDCDELADHIGFQEAYR</sequence>
<feature type="chain" id="PRO_0000148899" description="Osteocalcin">
    <location>
        <begin position="1" status="less than"/>
        <end position="24" status="greater than"/>
    </location>
</feature>
<feature type="domain" description="Gla" evidence="5">
    <location>
        <begin position="1" status="less than"/>
        <end position="24" status="greater than"/>
    </location>
</feature>
<feature type="binding site" evidence="2">
    <location>
        <position position="2"/>
    </location>
    <ligand>
        <name>Ca(2+)</name>
        <dbReference type="ChEBI" id="CHEBI:29108"/>
        <label>2</label>
    </ligand>
</feature>
<feature type="binding site" evidence="2">
    <location>
        <position position="5"/>
    </location>
    <ligand>
        <name>Ca(2+)</name>
        <dbReference type="ChEBI" id="CHEBI:29108"/>
        <label>2</label>
    </ligand>
</feature>
<feature type="binding site" evidence="2">
    <location>
        <position position="5"/>
    </location>
    <ligand>
        <name>Ca(2+)</name>
        <dbReference type="ChEBI" id="CHEBI:29108"/>
        <label>3</label>
    </ligand>
</feature>
<feature type="binding site" evidence="2">
    <location>
        <position position="11"/>
    </location>
    <ligand>
        <name>Ca(2+)</name>
        <dbReference type="ChEBI" id="CHEBI:29108"/>
        <label>3</label>
    </ligand>
</feature>
<feature type="modified residue" description="4-carboxyglutamate" evidence="3 5">
    <location>
        <position position="2"/>
    </location>
</feature>
<feature type="modified residue" description="4-carboxyglutamate" evidence="3 5">
    <location>
        <position position="5"/>
    </location>
</feature>
<feature type="disulfide bond" evidence="1 5">
    <location>
        <begin position="4"/>
        <end position="10"/>
    </location>
</feature>
<feature type="non-terminal residue" evidence="7">
    <location>
        <position position="1"/>
    </location>
</feature>
<feature type="non-terminal residue" evidence="7">
    <location>
        <position position="24"/>
    </location>
</feature>
<accession>P84351</accession>
<gene>
    <name evidence="1" type="primary">BGLAP</name>
</gene>
<name>OSTCN_HOMNE</name>
<proteinExistence type="evidence at protein level"/>
<comment type="function">
    <text evidence="4">The carboxylated form is one of the main organic components of the bone matrix, which constitutes 1-2% of the total bone protein: it acts as a negative regulator of bone formation and is required to limit bone formation without impairing bone resorption or mineralization. The carboxylated form binds strongly to apatite and calcium.</text>
</comment>
<comment type="function">
    <text evidence="4">The uncarboxylated form acts as a hormone secreted by osteoblasts, which regulates different cellular processes, such as energy metabolism, male fertility and brain development. Regulates of energy metabolism by acting as a hormone favoring pancreatic beta-cell proliferation, insulin secretion and sensitivity and energy expenditure. Uncarboxylated osteocalcin hormone also promotes testosterone production in the testes: acts as a ligand for G protein-coupled receptor GPRC6A at the surface of Leydig cells, initiating a signaling response that promotes the expression of enzymes required for testosterone synthesis in a CREB-dependent manner. Also acts as a regulator of brain development: osteocalcin hormone crosses the blood-brain barrier and acts as a ligand for GPR158 on neurons, initiating a signaling response that prevents neuronal apoptosis in the hippocampus, favors the synthesis of all monoamine neurotransmitters and inhibits that of gamma-aminobutyric acid (GABA). Osteocalcin also crosses the placenta during pregnancy and maternal osteocalcin is required for fetal brain development.</text>
</comment>
<comment type="subcellular location">
    <subcellularLocation>
        <location evidence="6">Secreted</location>
    </subcellularLocation>
</comment>
<comment type="PTM">
    <text evidence="4 5">Gamma-carboxyglutamate residues are formed by vitamin K dependent carboxylation by GGCX. These residues are essential for the binding of calcium (By similarity). Decarboxylation promotes the hormone activity (By similarity).</text>
</comment>
<comment type="similarity">
    <text evidence="8">Belongs to the osteocalcin/matrix Gla protein family.</text>
</comment>